<reference key="1">
    <citation type="journal article" date="2008" name="ISME J.">
        <title>Comparative genomics of two ecotypes of the marine planktonic copiotroph Alteromonas macleodii suggests alternative lifestyles associated with different kinds of particulate organic matter.</title>
        <authorList>
            <person name="Ivars-Martinez E."/>
            <person name="Martin-Cuadrado A.-B."/>
            <person name="D'Auria G."/>
            <person name="Mira A."/>
            <person name="Ferriera S."/>
            <person name="Johnson J."/>
            <person name="Friedman R."/>
            <person name="Rodriguez-Valera F."/>
        </authorList>
    </citation>
    <scope>NUCLEOTIDE SEQUENCE [LARGE SCALE GENOMIC DNA]</scope>
    <source>
        <strain>DSM 17117 / CIP 110805 / LMG 28347 / Deep ecotype</strain>
    </source>
</reference>
<protein>
    <recommendedName>
        <fullName evidence="1">LexA repressor</fullName>
        <ecNumber evidence="1">3.4.21.88</ecNumber>
    </recommendedName>
</protein>
<dbReference type="EC" id="3.4.21.88" evidence="1"/>
<dbReference type="EMBL" id="CP001103">
    <property type="protein sequence ID" value="AEB00145.1"/>
    <property type="molecule type" value="Genomic_DNA"/>
</dbReference>
<dbReference type="RefSeq" id="WP_012518730.1">
    <property type="nucleotide sequence ID" value="NC_011138.3"/>
</dbReference>
<dbReference type="SMR" id="B4S1W7"/>
<dbReference type="MEROPS" id="S24.001"/>
<dbReference type="GeneID" id="56344236"/>
<dbReference type="KEGG" id="amc:MADE_1020110"/>
<dbReference type="HOGENOM" id="CLU_066192_45_3_6"/>
<dbReference type="Proteomes" id="UP000001870">
    <property type="component" value="Chromosome"/>
</dbReference>
<dbReference type="GO" id="GO:0003677">
    <property type="term" value="F:DNA binding"/>
    <property type="evidence" value="ECO:0007669"/>
    <property type="project" value="UniProtKB-UniRule"/>
</dbReference>
<dbReference type="GO" id="GO:0004252">
    <property type="term" value="F:serine-type endopeptidase activity"/>
    <property type="evidence" value="ECO:0007669"/>
    <property type="project" value="UniProtKB-UniRule"/>
</dbReference>
<dbReference type="GO" id="GO:0006281">
    <property type="term" value="P:DNA repair"/>
    <property type="evidence" value="ECO:0007669"/>
    <property type="project" value="UniProtKB-UniRule"/>
</dbReference>
<dbReference type="GO" id="GO:0006260">
    <property type="term" value="P:DNA replication"/>
    <property type="evidence" value="ECO:0007669"/>
    <property type="project" value="UniProtKB-UniRule"/>
</dbReference>
<dbReference type="GO" id="GO:0045892">
    <property type="term" value="P:negative regulation of DNA-templated transcription"/>
    <property type="evidence" value="ECO:0007669"/>
    <property type="project" value="UniProtKB-UniRule"/>
</dbReference>
<dbReference type="GO" id="GO:0006508">
    <property type="term" value="P:proteolysis"/>
    <property type="evidence" value="ECO:0007669"/>
    <property type="project" value="InterPro"/>
</dbReference>
<dbReference type="GO" id="GO:0009432">
    <property type="term" value="P:SOS response"/>
    <property type="evidence" value="ECO:0007669"/>
    <property type="project" value="UniProtKB-UniRule"/>
</dbReference>
<dbReference type="CDD" id="cd06529">
    <property type="entry name" value="S24_LexA-like"/>
    <property type="match status" value="1"/>
</dbReference>
<dbReference type="FunFam" id="1.10.10.10:FF:000009">
    <property type="entry name" value="LexA repressor"/>
    <property type="match status" value="1"/>
</dbReference>
<dbReference type="FunFam" id="2.10.109.10:FF:000001">
    <property type="entry name" value="LexA repressor"/>
    <property type="match status" value="1"/>
</dbReference>
<dbReference type="Gene3D" id="2.10.109.10">
    <property type="entry name" value="Umud Fragment, subunit A"/>
    <property type="match status" value="1"/>
</dbReference>
<dbReference type="Gene3D" id="1.10.10.10">
    <property type="entry name" value="Winged helix-like DNA-binding domain superfamily/Winged helix DNA-binding domain"/>
    <property type="match status" value="1"/>
</dbReference>
<dbReference type="HAMAP" id="MF_00015">
    <property type="entry name" value="LexA"/>
    <property type="match status" value="1"/>
</dbReference>
<dbReference type="InterPro" id="IPR006200">
    <property type="entry name" value="LexA"/>
</dbReference>
<dbReference type="InterPro" id="IPR039418">
    <property type="entry name" value="LexA-like"/>
</dbReference>
<dbReference type="InterPro" id="IPR036286">
    <property type="entry name" value="LexA/Signal_pep-like_sf"/>
</dbReference>
<dbReference type="InterPro" id="IPR006199">
    <property type="entry name" value="LexA_DNA-bd_dom"/>
</dbReference>
<dbReference type="InterPro" id="IPR050077">
    <property type="entry name" value="LexA_repressor"/>
</dbReference>
<dbReference type="InterPro" id="IPR006197">
    <property type="entry name" value="Peptidase_S24_LexA"/>
</dbReference>
<dbReference type="InterPro" id="IPR015927">
    <property type="entry name" value="Peptidase_S24_S26A/B/C"/>
</dbReference>
<dbReference type="InterPro" id="IPR036388">
    <property type="entry name" value="WH-like_DNA-bd_sf"/>
</dbReference>
<dbReference type="InterPro" id="IPR036390">
    <property type="entry name" value="WH_DNA-bd_sf"/>
</dbReference>
<dbReference type="NCBIfam" id="TIGR00498">
    <property type="entry name" value="lexA"/>
    <property type="match status" value="1"/>
</dbReference>
<dbReference type="PANTHER" id="PTHR33516">
    <property type="entry name" value="LEXA REPRESSOR"/>
    <property type="match status" value="1"/>
</dbReference>
<dbReference type="PANTHER" id="PTHR33516:SF2">
    <property type="entry name" value="LEXA REPRESSOR-RELATED"/>
    <property type="match status" value="1"/>
</dbReference>
<dbReference type="Pfam" id="PF01726">
    <property type="entry name" value="LexA_DNA_bind"/>
    <property type="match status" value="1"/>
</dbReference>
<dbReference type="Pfam" id="PF00717">
    <property type="entry name" value="Peptidase_S24"/>
    <property type="match status" value="1"/>
</dbReference>
<dbReference type="PRINTS" id="PR00726">
    <property type="entry name" value="LEXASERPTASE"/>
</dbReference>
<dbReference type="SUPFAM" id="SSF51306">
    <property type="entry name" value="LexA/Signal peptidase"/>
    <property type="match status" value="1"/>
</dbReference>
<dbReference type="SUPFAM" id="SSF46785">
    <property type="entry name" value="Winged helix' DNA-binding domain"/>
    <property type="match status" value="1"/>
</dbReference>
<accession>B4S1W7</accession>
<accession>F2G510</accession>
<feature type="chain" id="PRO_1000089543" description="LexA repressor">
    <location>
        <begin position="1"/>
        <end position="208"/>
    </location>
</feature>
<feature type="DNA-binding region" description="H-T-H motif" evidence="1">
    <location>
        <begin position="28"/>
        <end position="48"/>
    </location>
</feature>
<feature type="active site" description="For autocatalytic cleavage activity" evidence="1">
    <location>
        <position position="125"/>
    </location>
</feature>
<feature type="active site" description="For autocatalytic cleavage activity" evidence="1">
    <location>
        <position position="162"/>
    </location>
</feature>
<feature type="site" description="Cleavage; by autolysis" evidence="1">
    <location>
        <begin position="90"/>
        <end position="91"/>
    </location>
</feature>
<keyword id="KW-0068">Autocatalytic cleavage</keyword>
<keyword id="KW-0227">DNA damage</keyword>
<keyword id="KW-0234">DNA repair</keyword>
<keyword id="KW-0235">DNA replication</keyword>
<keyword id="KW-0238">DNA-binding</keyword>
<keyword id="KW-0378">Hydrolase</keyword>
<keyword id="KW-0678">Repressor</keyword>
<keyword id="KW-0742">SOS response</keyword>
<keyword id="KW-0804">Transcription</keyword>
<keyword id="KW-0805">Transcription regulation</keyword>
<name>LEXA_ALTMD</name>
<sequence>MRPLTARQTEVLELIKTTMQETGMPPTRAEIARQLGFRSANAAEEHLKALARKGVIEILPGTSRGIKLNIPLDNEAEEEEGLPLIGRVAAGEPILAQEHVESHYKVDPALFQPQADFLLRVNGMSMKDIGILDGDLLAVHRTTDVHNGQVVVARVDEDVTVKRLEKRGREVLLHAENEEFSPIKVDLANEPFAIEGIAVGVIRNADWM</sequence>
<proteinExistence type="inferred from homology"/>
<gene>
    <name evidence="1" type="primary">lexA</name>
    <name type="ordered locus">MADE_1020110</name>
</gene>
<evidence type="ECO:0000255" key="1">
    <source>
        <dbReference type="HAMAP-Rule" id="MF_00015"/>
    </source>
</evidence>
<comment type="function">
    <text evidence="1">Represses a number of genes involved in the response to DNA damage (SOS response), including recA and lexA. In the presence of single-stranded DNA, RecA interacts with LexA causing an autocatalytic cleavage which disrupts the DNA-binding part of LexA, leading to derepression of the SOS regulon and eventually DNA repair.</text>
</comment>
<comment type="catalytic activity">
    <reaction evidence="1">
        <text>Hydrolysis of Ala-|-Gly bond in repressor LexA.</text>
        <dbReference type="EC" id="3.4.21.88"/>
    </reaction>
</comment>
<comment type="subunit">
    <text evidence="1">Homodimer.</text>
</comment>
<comment type="similarity">
    <text evidence="1">Belongs to the peptidase S24 family.</text>
</comment>
<organism>
    <name type="scientific">Alteromonas mediterranea (strain DSM 17117 / CIP 110805 / LMG 28347 / Deep ecotype)</name>
    <dbReference type="NCBI Taxonomy" id="1774373"/>
    <lineage>
        <taxon>Bacteria</taxon>
        <taxon>Pseudomonadati</taxon>
        <taxon>Pseudomonadota</taxon>
        <taxon>Gammaproteobacteria</taxon>
        <taxon>Alteromonadales</taxon>
        <taxon>Alteromonadaceae</taxon>
        <taxon>Alteromonas/Salinimonas group</taxon>
        <taxon>Alteromonas</taxon>
    </lineage>
</organism>